<name>MRAY_RICAH</name>
<protein>
    <recommendedName>
        <fullName evidence="1">Phospho-N-acetylmuramoyl-pentapeptide-transferase</fullName>
        <ecNumber evidence="1">2.7.8.13</ecNumber>
    </recommendedName>
    <alternativeName>
        <fullName evidence="1">UDP-MurNAc-pentapeptide phosphotransferase</fullName>
    </alternativeName>
</protein>
<comment type="function">
    <text evidence="1">Catalyzes the initial step of the lipid cycle reactions in the biosynthesis of the cell wall peptidoglycan: transfers peptidoglycan precursor phospho-MurNAc-pentapeptide from UDP-MurNAc-pentapeptide onto the lipid carrier undecaprenyl phosphate, yielding undecaprenyl-pyrophosphoryl-MurNAc-pentapeptide, known as lipid I.</text>
</comment>
<comment type="catalytic activity">
    <reaction evidence="1">
        <text>UDP-N-acetyl-alpha-D-muramoyl-L-alanyl-gamma-D-glutamyl-meso-2,6-diaminopimeloyl-D-alanyl-D-alanine + di-trans,octa-cis-undecaprenyl phosphate = di-trans,octa-cis-undecaprenyl diphospho-N-acetyl-alpha-D-muramoyl-L-alanyl-D-glutamyl-meso-2,6-diaminopimeloyl-D-alanyl-D-alanine + UMP</text>
        <dbReference type="Rhea" id="RHEA:28386"/>
        <dbReference type="ChEBI" id="CHEBI:57865"/>
        <dbReference type="ChEBI" id="CHEBI:60392"/>
        <dbReference type="ChEBI" id="CHEBI:61386"/>
        <dbReference type="ChEBI" id="CHEBI:61387"/>
        <dbReference type="EC" id="2.7.8.13"/>
    </reaction>
</comment>
<comment type="cofactor">
    <cofactor evidence="1">
        <name>Mg(2+)</name>
        <dbReference type="ChEBI" id="CHEBI:18420"/>
    </cofactor>
</comment>
<comment type="pathway">
    <text evidence="1">Cell wall biogenesis; peptidoglycan biosynthesis.</text>
</comment>
<comment type="subcellular location">
    <subcellularLocation>
        <location evidence="1">Cell inner membrane</location>
        <topology evidence="1">Multi-pass membrane protein</topology>
    </subcellularLocation>
</comment>
<comment type="similarity">
    <text evidence="1">Belongs to the glycosyltransferase 4 family. MraY subfamily.</text>
</comment>
<comment type="sequence caution" evidence="2">
    <conflict type="erroneous initiation">
        <sequence resource="EMBL-CDS" id="ABV75194"/>
    </conflict>
</comment>
<proteinExistence type="inferred from homology"/>
<accession>A8GP69</accession>
<gene>
    <name evidence="1" type="primary">mraY</name>
    <name type="ordered locus">A1C_04660</name>
</gene>
<evidence type="ECO:0000255" key="1">
    <source>
        <dbReference type="HAMAP-Rule" id="MF_00038"/>
    </source>
</evidence>
<evidence type="ECO:0000305" key="2"/>
<reference key="1">
    <citation type="submission" date="2007-09" db="EMBL/GenBank/DDBJ databases">
        <title>Complete genome sequence of Rickettsia akari.</title>
        <authorList>
            <person name="Madan A."/>
            <person name="Fahey J."/>
            <person name="Helton E."/>
            <person name="Ketteman M."/>
            <person name="Madan A."/>
            <person name="Rodrigues S."/>
            <person name="Sanchez A."/>
            <person name="Whiting M."/>
            <person name="Dasch G."/>
            <person name="Eremeeva M."/>
        </authorList>
    </citation>
    <scope>NUCLEOTIDE SEQUENCE [LARGE SCALE GENOMIC DNA]</scope>
    <source>
        <strain>Hartford</strain>
    </source>
</reference>
<dbReference type="EC" id="2.7.8.13" evidence="1"/>
<dbReference type="EMBL" id="CP000847">
    <property type="protein sequence ID" value="ABV75194.1"/>
    <property type="status" value="ALT_INIT"/>
    <property type="molecule type" value="Genomic_DNA"/>
</dbReference>
<dbReference type="RefSeq" id="WP_041816848.1">
    <property type="nucleotide sequence ID" value="NC_009881.1"/>
</dbReference>
<dbReference type="SMR" id="A8GP69"/>
<dbReference type="STRING" id="293614.A1C_04660"/>
<dbReference type="KEGG" id="rak:A1C_04660"/>
<dbReference type="eggNOG" id="COG0472">
    <property type="taxonomic scope" value="Bacteria"/>
</dbReference>
<dbReference type="HOGENOM" id="CLU_023982_0_0_5"/>
<dbReference type="UniPathway" id="UPA00219"/>
<dbReference type="Proteomes" id="UP000006830">
    <property type="component" value="Chromosome"/>
</dbReference>
<dbReference type="GO" id="GO:0005886">
    <property type="term" value="C:plasma membrane"/>
    <property type="evidence" value="ECO:0007669"/>
    <property type="project" value="UniProtKB-SubCell"/>
</dbReference>
<dbReference type="GO" id="GO:0046872">
    <property type="term" value="F:metal ion binding"/>
    <property type="evidence" value="ECO:0007669"/>
    <property type="project" value="UniProtKB-KW"/>
</dbReference>
<dbReference type="GO" id="GO:0008963">
    <property type="term" value="F:phospho-N-acetylmuramoyl-pentapeptide-transferase activity"/>
    <property type="evidence" value="ECO:0007669"/>
    <property type="project" value="UniProtKB-UniRule"/>
</dbReference>
<dbReference type="GO" id="GO:0051992">
    <property type="term" value="F:UDP-N-acetylmuramoyl-L-alanyl-D-glutamyl-meso-2,6-diaminopimelyl-D-alanyl-D-alanine:undecaprenyl-phosphate transferase activity"/>
    <property type="evidence" value="ECO:0007669"/>
    <property type="project" value="RHEA"/>
</dbReference>
<dbReference type="GO" id="GO:0051301">
    <property type="term" value="P:cell division"/>
    <property type="evidence" value="ECO:0007669"/>
    <property type="project" value="UniProtKB-KW"/>
</dbReference>
<dbReference type="GO" id="GO:0071555">
    <property type="term" value="P:cell wall organization"/>
    <property type="evidence" value="ECO:0007669"/>
    <property type="project" value="UniProtKB-KW"/>
</dbReference>
<dbReference type="GO" id="GO:0009252">
    <property type="term" value="P:peptidoglycan biosynthetic process"/>
    <property type="evidence" value="ECO:0007669"/>
    <property type="project" value="UniProtKB-UniRule"/>
</dbReference>
<dbReference type="GO" id="GO:0008360">
    <property type="term" value="P:regulation of cell shape"/>
    <property type="evidence" value="ECO:0007669"/>
    <property type="project" value="UniProtKB-KW"/>
</dbReference>
<dbReference type="CDD" id="cd06852">
    <property type="entry name" value="GT_MraY"/>
    <property type="match status" value="1"/>
</dbReference>
<dbReference type="HAMAP" id="MF_00038">
    <property type="entry name" value="MraY"/>
    <property type="match status" value="1"/>
</dbReference>
<dbReference type="InterPro" id="IPR000715">
    <property type="entry name" value="Glycosyl_transferase_4"/>
</dbReference>
<dbReference type="InterPro" id="IPR003524">
    <property type="entry name" value="PNAcMuramoyl-5peptid_Trfase"/>
</dbReference>
<dbReference type="InterPro" id="IPR018480">
    <property type="entry name" value="PNAcMuramoyl-5peptid_Trfase_CS"/>
</dbReference>
<dbReference type="NCBIfam" id="TIGR00445">
    <property type="entry name" value="mraY"/>
    <property type="match status" value="1"/>
</dbReference>
<dbReference type="PANTHER" id="PTHR22926">
    <property type="entry name" value="PHOSPHO-N-ACETYLMURAMOYL-PENTAPEPTIDE-TRANSFERASE"/>
    <property type="match status" value="1"/>
</dbReference>
<dbReference type="PANTHER" id="PTHR22926:SF5">
    <property type="entry name" value="PHOSPHO-N-ACETYLMURAMOYL-PENTAPEPTIDE-TRANSFERASE HOMOLOG"/>
    <property type="match status" value="1"/>
</dbReference>
<dbReference type="Pfam" id="PF00953">
    <property type="entry name" value="Glycos_transf_4"/>
    <property type="match status" value="1"/>
</dbReference>
<dbReference type="Pfam" id="PF10555">
    <property type="entry name" value="MraY_sig1"/>
    <property type="match status" value="1"/>
</dbReference>
<dbReference type="PROSITE" id="PS01347">
    <property type="entry name" value="MRAY_1"/>
    <property type="match status" value="1"/>
</dbReference>
<dbReference type="PROSITE" id="PS01348">
    <property type="entry name" value="MRAY_2"/>
    <property type="match status" value="1"/>
</dbReference>
<sequence>MLYNLLLPHIHNSHIANLFHYITFRSGLAIIITLSLSFIMGPILIKFLRSLQKNGQPIRSDGPESHQTKAGTPTMGGIMIILSSGLSTLLLADLTNQYIWITLFGFISFGIIGFMDDYAKVTKNNHYGVRGKSKLVLQGIISLIICVLLEYLDKNPSHLLNVPFFKNLNLDLGYFYIVFAIFVIVGSSNAVNLTDGLDGLATVPIAFTAGSFALISYLVGNLIYSHYLQLTYIPNTGELTVLCAGLVGSCLGFLWFNAQPAEVFMGDTGSLSLGGVLGIISVITKHEIVLAIVGGLFVIETASVILQVYYFKATQGKRIFKMAPLHHHFEKHGWAESKVVIRFWIISVIFALIGLSSLKLR</sequence>
<keyword id="KW-0131">Cell cycle</keyword>
<keyword id="KW-0132">Cell division</keyword>
<keyword id="KW-0997">Cell inner membrane</keyword>
<keyword id="KW-1003">Cell membrane</keyword>
<keyword id="KW-0133">Cell shape</keyword>
<keyword id="KW-0961">Cell wall biogenesis/degradation</keyword>
<keyword id="KW-0460">Magnesium</keyword>
<keyword id="KW-0472">Membrane</keyword>
<keyword id="KW-0479">Metal-binding</keyword>
<keyword id="KW-0573">Peptidoglycan synthesis</keyword>
<keyword id="KW-0808">Transferase</keyword>
<keyword id="KW-0812">Transmembrane</keyword>
<keyword id="KW-1133">Transmembrane helix</keyword>
<feature type="chain" id="PRO_0000332545" description="Phospho-N-acetylmuramoyl-pentapeptide-transferase">
    <location>
        <begin position="1"/>
        <end position="361"/>
    </location>
</feature>
<feature type="transmembrane region" description="Helical" evidence="1">
    <location>
        <begin position="28"/>
        <end position="48"/>
    </location>
</feature>
<feature type="transmembrane region" description="Helical" evidence="1">
    <location>
        <begin position="74"/>
        <end position="94"/>
    </location>
</feature>
<feature type="transmembrane region" description="Helical" evidence="1">
    <location>
        <begin position="99"/>
        <end position="119"/>
    </location>
</feature>
<feature type="transmembrane region" description="Helical" evidence="1">
    <location>
        <begin position="133"/>
        <end position="153"/>
    </location>
</feature>
<feature type="transmembrane region" description="Helical" evidence="1">
    <location>
        <begin position="168"/>
        <end position="188"/>
    </location>
</feature>
<feature type="transmembrane region" description="Helical" evidence="1">
    <location>
        <begin position="203"/>
        <end position="223"/>
    </location>
</feature>
<feature type="transmembrane region" description="Helical" evidence="1">
    <location>
        <begin position="236"/>
        <end position="256"/>
    </location>
</feature>
<feature type="transmembrane region" description="Helical" evidence="1">
    <location>
        <begin position="263"/>
        <end position="283"/>
    </location>
</feature>
<feature type="transmembrane region" description="Helical" evidence="1">
    <location>
        <begin position="288"/>
        <end position="308"/>
    </location>
</feature>
<feature type="transmembrane region" description="Helical" evidence="1">
    <location>
        <begin position="338"/>
        <end position="358"/>
    </location>
</feature>
<organism>
    <name type="scientific">Rickettsia akari (strain Hartford)</name>
    <dbReference type="NCBI Taxonomy" id="293614"/>
    <lineage>
        <taxon>Bacteria</taxon>
        <taxon>Pseudomonadati</taxon>
        <taxon>Pseudomonadota</taxon>
        <taxon>Alphaproteobacteria</taxon>
        <taxon>Rickettsiales</taxon>
        <taxon>Rickettsiaceae</taxon>
        <taxon>Rickettsieae</taxon>
        <taxon>Rickettsia</taxon>
        <taxon>spotted fever group</taxon>
    </lineage>
</organism>